<keyword id="KW-1185">Reference proteome</keyword>
<keyword id="KW-0687">Ribonucleoprotein</keyword>
<keyword id="KW-0689">Ribosomal protein</keyword>
<keyword id="KW-0694">RNA-binding</keyword>
<keyword id="KW-0699">rRNA-binding</keyword>
<evidence type="ECO:0000255" key="1">
    <source>
        <dbReference type="HAMAP-Rule" id="MF_01309"/>
    </source>
</evidence>
<evidence type="ECO:0000305" key="2"/>
<protein>
    <recommendedName>
        <fullName evidence="1">Small ribosomal subunit protein uS3</fullName>
    </recommendedName>
    <alternativeName>
        <fullName evidence="2">30S ribosomal protein S3</fullName>
    </alternativeName>
</protein>
<accession>A5D5G1</accession>
<organism>
    <name type="scientific">Pelotomaculum thermopropionicum (strain DSM 13744 / JCM 10971 / SI)</name>
    <dbReference type="NCBI Taxonomy" id="370438"/>
    <lineage>
        <taxon>Bacteria</taxon>
        <taxon>Bacillati</taxon>
        <taxon>Bacillota</taxon>
        <taxon>Clostridia</taxon>
        <taxon>Eubacteriales</taxon>
        <taxon>Desulfotomaculaceae</taxon>
        <taxon>Pelotomaculum</taxon>
    </lineage>
</organism>
<feature type="chain" id="PRO_1000086141" description="Small ribosomal subunit protein uS3">
    <location>
        <begin position="1"/>
        <end position="231"/>
    </location>
</feature>
<feature type="domain" description="KH type-2" evidence="1">
    <location>
        <begin position="39"/>
        <end position="107"/>
    </location>
</feature>
<comment type="function">
    <text evidence="1">Binds the lower part of the 30S subunit head. Binds mRNA in the 70S ribosome, positioning it for translation.</text>
</comment>
<comment type="subunit">
    <text evidence="1">Part of the 30S ribosomal subunit. Forms a tight complex with proteins S10 and S14.</text>
</comment>
<comment type="similarity">
    <text evidence="1">Belongs to the universal ribosomal protein uS3 family.</text>
</comment>
<gene>
    <name evidence="1" type="primary">rpsC</name>
    <name type="ordered locus">PTH_0326</name>
</gene>
<name>RS3_PELTS</name>
<dbReference type="EMBL" id="AP009389">
    <property type="protein sequence ID" value="BAF58507.1"/>
    <property type="molecule type" value="Genomic_DNA"/>
</dbReference>
<dbReference type="SMR" id="A5D5G1"/>
<dbReference type="STRING" id="370438.PTH_0326"/>
<dbReference type="KEGG" id="pth:PTH_0326"/>
<dbReference type="eggNOG" id="COG0092">
    <property type="taxonomic scope" value="Bacteria"/>
</dbReference>
<dbReference type="HOGENOM" id="CLU_058591_0_2_9"/>
<dbReference type="Proteomes" id="UP000006556">
    <property type="component" value="Chromosome"/>
</dbReference>
<dbReference type="GO" id="GO:0022627">
    <property type="term" value="C:cytosolic small ribosomal subunit"/>
    <property type="evidence" value="ECO:0007669"/>
    <property type="project" value="TreeGrafter"/>
</dbReference>
<dbReference type="GO" id="GO:0003729">
    <property type="term" value="F:mRNA binding"/>
    <property type="evidence" value="ECO:0007669"/>
    <property type="project" value="UniProtKB-UniRule"/>
</dbReference>
<dbReference type="GO" id="GO:0019843">
    <property type="term" value="F:rRNA binding"/>
    <property type="evidence" value="ECO:0007669"/>
    <property type="project" value="UniProtKB-UniRule"/>
</dbReference>
<dbReference type="GO" id="GO:0003735">
    <property type="term" value="F:structural constituent of ribosome"/>
    <property type="evidence" value="ECO:0007669"/>
    <property type="project" value="InterPro"/>
</dbReference>
<dbReference type="GO" id="GO:0006412">
    <property type="term" value="P:translation"/>
    <property type="evidence" value="ECO:0007669"/>
    <property type="project" value="UniProtKB-UniRule"/>
</dbReference>
<dbReference type="CDD" id="cd02412">
    <property type="entry name" value="KH-II_30S_S3"/>
    <property type="match status" value="1"/>
</dbReference>
<dbReference type="FunFam" id="3.30.1140.32:FF:000001">
    <property type="entry name" value="30S ribosomal protein S3"/>
    <property type="match status" value="1"/>
</dbReference>
<dbReference type="FunFam" id="3.30.300.20:FF:000001">
    <property type="entry name" value="30S ribosomal protein S3"/>
    <property type="match status" value="1"/>
</dbReference>
<dbReference type="Gene3D" id="3.30.300.20">
    <property type="match status" value="1"/>
</dbReference>
<dbReference type="Gene3D" id="3.30.1140.32">
    <property type="entry name" value="Ribosomal protein S3, C-terminal domain"/>
    <property type="match status" value="1"/>
</dbReference>
<dbReference type="HAMAP" id="MF_01309_B">
    <property type="entry name" value="Ribosomal_uS3_B"/>
    <property type="match status" value="1"/>
</dbReference>
<dbReference type="InterPro" id="IPR004087">
    <property type="entry name" value="KH_dom"/>
</dbReference>
<dbReference type="InterPro" id="IPR015946">
    <property type="entry name" value="KH_dom-like_a/b"/>
</dbReference>
<dbReference type="InterPro" id="IPR004044">
    <property type="entry name" value="KH_dom_type_2"/>
</dbReference>
<dbReference type="InterPro" id="IPR009019">
    <property type="entry name" value="KH_sf_prok-type"/>
</dbReference>
<dbReference type="InterPro" id="IPR036419">
    <property type="entry name" value="Ribosomal_S3_C_sf"/>
</dbReference>
<dbReference type="InterPro" id="IPR005704">
    <property type="entry name" value="Ribosomal_uS3_bac-typ"/>
</dbReference>
<dbReference type="InterPro" id="IPR001351">
    <property type="entry name" value="Ribosomal_uS3_C"/>
</dbReference>
<dbReference type="InterPro" id="IPR018280">
    <property type="entry name" value="Ribosomal_uS3_CS"/>
</dbReference>
<dbReference type="NCBIfam" id="TIGR01009">
    <property type="entry name" value="rpsC_bact"/>
    <property type="match status" value="1"/>
</dbReference>
<dbReference type="PANTHER" id="PTHR11760">
    <property type="entry name" value="30S/40S RIBOSOMAL PROTEIN S3"/>
    <property type="match status" value="1"/>
</dbReference>
<dbReference type="PANTHER" id="PTHR11760:SF19">
    <property type="entry name" value="SMALL RIBOSOMAL SUBUNIT PROTEIN US3C"/>
    <property type="match status" value="1"/>
</dbReference>
<dbReference type="Pfam" id="PF07650">
    <property type="entry name" value="KH_2"/>
    <property type="match status" value="1"/>
</dbReference>
<dbReference type="Pfam" id="PF00189">
    <property type="entry name" value="Ribosomal_S3_C"/>
    <property type="match status" value="1"/>
</dbReference>
<dbReference type="SMART" id="SM00322">
    <property type="entry name" value="KH"/>
    <property type="match status" value="1"/>
</dbReference>
<dbReference type="SUPFAM" id="SSF54814">
    <property type="entry name" value="Prokaryotic type KH domain (KH-domain type II)"/>
    <property type="match status" value="1"/>
</dbReference>
<dbReference type="SUPFAM" id="SSF54821">
    <property type="entry name" value="Ribosomal protein S3 C-terminal domain"/>
    <property type="match status" value="1"/>
</dbReference>
<dbReference type="PROSITE" id="PS50823">
    <property type="entry name" value="KH_TYPE_2"/>
    <property type="match status" value="1"/>
</dbReference>
<dbReference type="PROSITE" id="PS00548">
    <property type="entry name" value="RIBOSOMAL_S3"/>
    <property type="match status" value="1"/>
</dbReference>
<reference key="1">
    <citation type="journal article" date="2008" name="Genome Res.">
        <title>The genome of Pelotomaculum thermopropionicum reveals niche-associated evolution in anaerobic microbiota.</title>
        <authorList>
            <person name="Kosaka T."/>
            <person name="Kato S."/>
            <person name="Shimoyama T."/>
            <person name="Ishii S."/>
            <person name="Abe T."/>
            <person name="Watanabe K."/>
        </authorList>
    </citation>
    <scope>NUCLEOTIDE SEQUENCE [LARGE SCALE GENOMIC DNA]</scope>
    <source>
        <strain>DSM 13744 / JCM 10971 / SI</strain>
    </source>
</reference>
<proteinExistence type="inferred from homology"/>
<sequence>MGQKVNPKGLRIGIIRDWEGKWYADKRNYAALLHEDIKIRKFIKEKLFAAGISRIQIERAANRVKVSIHTAKPGIVIGRGGAEVENLRKQLENLTGKQVSVNIVEIKVPELDAQLVAENVAAQLEKRIAFRRAMKQVVSRSMKMGAKGIKVACGGRLAGAEIARTEWYSEGKVPLHTLRADIDYGFAEANTTYGKIGVKVWIYRGEVLPEAKTPAKTAARGGKEAPGEGGE</sequence>